<organism>
    <name type="scientific">Acinetobacter baumannii (strain AB307-0294)</name>
    <dbReference type="NCBI Taxonomy" id="557600"/>
    <lineage>
        <taxon>Bacteria</taxon>
        <taxon>Pseudomonadati</taxon>
        <taxon>Pseudomonadota</taxon>
        <taxon>Gammaproteobacteria</taxon>
        <taxon>Moraxellales</taxon>
        <taxon>Moraxellaceae</taxon>
        <taxon>Acinetobacter</taxon>
        <taxon>Acinetobacter calcoaceticus/baumannii complex</taxon>
    </lineage>
</organism>
<evidence type="ECO:0000255" key="1">
    <source>
        <dbReference type="HAMAP-Rule" id="MF_00758"/>
    </source>
</evidence>
<sequence>MTKQYMTHRCLIAPPEMADDFFANTVIYLARHDEEGAQGIIINRPAGIQIKELLNDLDIDADNVNPHEVLQGGPLRPEAGFVLHTGQPTWHSSIAVGENVCITTSKDILDAIAHNEGVGRYQIALGYASWGKNQLEDEIARGDWLICDADMDLIFNLPYDDRWDAAYKKIGVDRTWLASEIGHA</sequence>
<comment type="similarity">
    <text evidence="1">Belongs to the UPF0301 (AlgH) family.</text>
</comment>
<proteinExistence type="inferred from homology"/>
<name>Y3217_ACIB3</name>
<protein>
    <recommendedName>
        <fullName evidence="1">UPF0301 protein ABBFA_003217</fullName>
    </recommendedName>
</protein>
<dbReference type="EMBL" id="CP001172">
    <property type="protein sequence ID" value="ACJ56084.1"/>
    <property type="molecule type" value="Genomic_DNA"/>
</dbReference>
<dbReference type="RefSeq" id="WP_001979301.1">
    <property type="nucleotide sequence ID" value="NZ_CP001172.1"/>
</dbReference>
<dbReference type="SMR" id="B7H1G7"/>
<dbReference type="HOGENOM" id="CLU_057596_1_0_6"/>
<dbReference type="Proteomes" id="UP000006924">
    <property type="component" value="Chromosome"/>
</dbReference>
<dbReference type="GO" id="GO:0005829">
    <property type="term" value="C:cytosol"/>
    <property type="evidence" value="ECO:0007669"/>
    <property type="project" value="TreeGrafter"/>
</dbReference>
<dbReference type="Gene3D" id="3.40.1740.10">
    <property type="entry name" value="VC0467-like"/>
    <property type="match status" value="1"/>
</dbReference>
<dbReference type="HAMAP" id="MF_00758">
    <property type="entry name" value="UPF0301"/>
    <property type="match status" value="1"/>
</dbReference>
<dbReference type="InterPro" id="IPR003774">
    <property type="entry name" value="AlgH-like"/>
</dbReference>
<dbReference type="NCBIfam" id="NF001266">
    <property type="entry name" value="PRK00228.1-1"/>
    <property type="match status" value="1"/>
</dbReference>
<dbReference type="PANTHER" id="PTHR30327">
    <property type="entry name" value="UNCHARACTERIZED PROTEIN YQGE"/>
    <property type="match status" value="1"/>
</dbReference>
<dbReference type="PANTHER" id="PTHR30327:SF1">
    <property type="entry name" value="UPF0301 PROTEIN YQGE"/>
    <property type="match status" value="1"/>
</dbReference>
<dbReference type="Pfam" id="PF02622">
    <property type="entry name" value="DUF179"/>
    <property type="match status" value="1"/>
</dbReference>
<dbReference type="SUPFAM" id="SSF143456">
    <property type="entry name" value="VC0467-like"/>
    <property type="match status" value="1"/>
</dbReference>
<reference key="1">
    <citation type="journal article" date="2008" name="J. Bacteriol.">
        <title>Comparative genome sequence analysis of multidrug-resistant Acinetobacter baumannii.</title>
        <authorList>
            <person name="Adams M.D."/>
            <person name="Goglin K."/>
            <person name="Molyneaux N."/>
            <person name="Hujer K.M."/>
            <person name="Lavender H."/>
            <person name="Jamison J.J."/>
            <person name="MacDonald I.J."/>
            <person name="Martin K.M."/>
            <person name="Russo T."/>
            <person name="Campagnari A.A."/>
            <person name="Hujer A.M."/>
            <person name="Bonomo R.A."/>
            <person name="Gill S.R."/>
        </authorList>
    </citation>
    <scope>NUCLEOTIDE SEQUENCE [LARGE SCALE GENOMIC DNA]</scope>
    <source>
        <strain>AB307-0294</strain>
    </source>
</reference>
<gene>
    <name type="ordered locus">ABBFA_003217</name>
</gene>
<feature type="chain" id="PRO_1000198245" description="UPF0301 protein ABBFA_003217">
    <location>
        <begin position="1"/>
        <end position="184"/>
    </location>
</feature>
<accession>B7H1G7</accession>